<reference key="1">
    <citation type="journal article" date="2006" name="Proteomics">
        <title>Proteomic analysis of Tityus discrepans scorpion venom and amino acid sequence of novel toxins.</title>
        <authorList>
            <person name="Batista C.V.F."/>
            <person name="D'Suze G."/>
            <person name="Gomez-Lagunas F."/>
            <person name="Zamudio F.Z."/>
            <person name="Encarnacion S."/>
            <person name="Sevcik C."/>
            <person name="Possani L.D."/>
        </authorList>
    </citation>
    <scope>PROTEIN SEQUENCE</scope>
    <scope>MASS SPECTROMETRY</scope>
    <scope>SUBCELLULAR LOCATION</scope>
    <scope>FUNCTION</scope>
    <source>
        <tissue>Venom</tissue>
    </source>
</reference>
<reference key="2">
    <citation type="journal article" date="2012" name="Biochemistry">
        <title>Looking over toxin-K(+) channel interactions. Clues from the structural and functional characterization of alpha-KTx toxin Tc32, a Kv1.3 channel blocker.</title>
        <authorList>
            <person name="Stehling E.G."/>
            <person name="Sforca M.L."/>
            <person name="Zanchin N.I."/>
            <person name="Oyama S. Jr."/>
            <person name="Pignatelli A."/>
            <person name="Belluzzi O."/>
            <person name="Polverini E."/>
            <person name="Corsini R."/>
            <person name="Spisni A."/>
            <person name="Pertinhez T.A."/>
        </authorList>
    </citation>
    <scope>3D-STRUCTURE MODELING</scope>
</reference>
<sequence>TGPQTTCQASTCEAGCKQIGKSMKSCQGDTCECA</sequence>
<keyword id="KW-0903">Direct protein sequencing</keyword>
<keyword id="KW-1015">Disulfide bond</keyword>
<keyword id="KW-0872">Ion channel impairing toxin</keyword>
<keyword id="KW-0528">Neurotoxin</keyword>
<keyword id="KW-0632">Potassium channel impairing toxin</keyword>
<keyword id="KW-0964">Secreted</keyword>
<keyword id="KW-0800">Toxin</keyword>
<keyword id="KW-1220">Voltage-gated potassium channel impairing toxin</keyword>
<proteinExistence type="evidence at protein level"/>
<organism>
    <name type="scientific">Tityus discrepans</name>
    <name type="common">Venezuelan scorpion</name>
    <dbReference type="NCBI Taxonomy" id="57059"/>
    <lineage>
        <taxon>Eukaryota</taxon>
        <taxon>Metazoa</taxon>
        <taxon>Ecdysozoa</taxon>
        <taxon>Arthropoda</taxon>
        <taxon>Chelicerata</taxon>
        <taxon>Arachnida</taxon>
        <taxon>Scorpiones</taxon>
        <taxon>Buthida</taxon>
        <taxon>Buthoidea</taxon>
        <taxon>Buthidae</taxon>
        <taxon>Tityus</taxon>
    </lineage>
</organism>
<accession>P0C1X5</accession>
<feature type="peptide" id="PRO_0000249964" description="Potassium channel toxin alpha-KTx 18.2" evidence="2">
    <location>
        <begin position="1"/>
        <end position="34"/>
    </location>
</feature>
<feature type="site" description="Penetrates into Kv1.1 and Kv1.3 pores (when K-21 does not penetrate into it)" evidence="5">
    <location>
        <position position="17"/>
    </location>
</feature>
<feature type="site" description="Penetrates into Kv1.1 and Kv1.3 pores (when K-17 does not penetrate into it)" evidence="5">
    <location>
        <position position="21"/>
    </location>
</feature>
<feature type="disulfide bond" evidence="1">
    <location>
        <begin position="7"/>
        <end position="26"/>
    </location>
</feature>
<feature type="disulfide bond" evidence="1">
    <location>
        <begin position="12"/>
        <end position="31"/>
    </location>
</feature>
<feature type="disulfide bond" evidence="1">
    <location>
        <begin position="16"/>
        <end position="33"/>
    </location>
</feature>
<evidence type="ECO:0000250" key="1">
    <source>
        <dbReference type="UniProtKB" id="P60211"/>
    </source>
</evidence>
<evidence type="ECO:0000269" key="2">
    <source>
    </source>
</evidence>
<evidence type="ECO:0000303" key="3">
    <source>
    </source>
</evidence>
<evidence type="ECO:0000305" key="4"/>
<evidence type="ECO:0000305" key="5">
    <source>
    </source>
</evidence>
<comment type="function">
    <text evidence="2">Reversibly blocks Shaker B potassium channels.</text>
</comment>
<comment type="subcellular location">
    <subcellularLocation>
        <location evidence="2">Secreted</location>
    </subcellularLocation>
</comment>
<comment type="tissue specificity">
    <text evidence="4">Expressed by the venom gland.</text>
</comment>
<comment type="domain">
    <text evidence="1">Has the structural arrangement of an alpha-helix connected to a beta-sheet by disulfide bonds (CSalpha/beta).</text>
</comment>
<comment type="mass spectrometry"/>
<comment type="similarity">
    <text evidence="4">Belongs to the short scorpion toxin superfamily. Potassium channel inhibitor family. Alpha-KTx 18 subfamily.</text>
</comment>
<comment type="caution">
    <text evidence="4">Lacks the dyad motif characteristic of alpha-KTx and generally associated with channel blockage.</text>
</comment>
<name>KA182_TITDI</name>
<protein>
    <recommendedName>
        <fullName>Potassium channel toxin alpha-KTx 18.2</fullName>
    </recommendedName>
    <alternativeName>
        <fullName evidence="3">Toxin TdK2</fullName>
    </alternativeName>
</protein>
<dbReference type="SMR" id="P0C1X5"/>
<dbReference type="GO" id="GO:0005576">
    <property type="term" value="C:extracellular region"/>
    <property type="evidence" value="ECO:0007669"/>
    <property type="project" value="UniProtKB-SubCell"/>
</dbReference>
<dbReference type="GO" id="GO:0015459">
    <property type="term" value="F:potassium channel regulator activity"/>
    <property type="evidence" value="ECO:0007669"/>
    <property type="project" value="UniProtKB-KW"/>
</dbReference>
<dbReference type="GO" id="GO:0090729">
    <property type="term" value="F:toxin activity"/>
    <property type="evidence" value="ECO:0007669"/>
    <property type="project" value="UniProtKB-KW"/>
</dbReference>